<feature type="transit peptide" description="Chloroplast" evidence="5">
    <location>
        <begin position="1"/>
        <end position="34"/>
    </location>
</feature>
<feature type="chain" id="PRO_0000430637" description="Probable 2-carboxy-D-arabinitol-1-phosphatase" evidence="3">
    <location>
        <begin position="35"/>
        <end position="482"/>
    </location>
</feature>
<feature type="active site" description="Tele-phosphohistidine intermediate" evidence="1">
    <location>
        <position position="55"/>
    </location>
</feature>
<feature type="active site" description="Proton donor/acceptor" evidence="1">
    <location>
        <position position="129"/>
    </location>
</feature>
<sequence>MISLPLTTPILPSRCLLHKTRRQNSTRRRLLIRSSSSLQDQFTVETTKRVVLVRHGQSTWNEEGRIQGSSDFSVLTKKGESQAEISRQMLIDDSFDVCFTSPLKRSKKTAEIIWGSRESEMIFDYDLREIDLYSFQGLLKKEGKEKFGEAFKQWQEDPANFIIDGHYPVRELWSRARSCWPGILAHESKSVLVVAHNAVNQALLATAIGLGTEYFRSLLQSNCGVSVLDFIPRADGGSPHVCLNRLNQTPNSPLAGGSSGGRKASKQIILVCHGQGNNEDSAVINQAANNDQAMNMLGVIHSQKTAELLLDLRVSSIVCSPKTASIESSGVISRVQEAAGCLGVDNVPHYVKTKQMNELDVESVLRKSNKDNDVIASQLDEEAFSALWNRSEKAWESLLDELSDEKSNPGEIMVVVGPAMTHISLIAQCLNLTKEALGLFHLDAGSISVIDFPDGPSSKGVIRCTNYTAHLGRWSIPITKPA</sequence>
<organism>
    <name type="scientific">Arabidopsis thaliana</name>
    <name type="common">Mouse-ear cress</name>
    <dbReference type="NCBI Taxonomy" id="3702"/>
    <lineage>
        <taxon>Eukaryota</taxon>
        <taxon>Viridiplantae</taxon>
        <taxon>Streptophyta</taxon>
        <taxon>Embryophyta</taxon>
        <taxon>Tracheophyta</taxon>
        <taxon>Spermatophyta</taxon>
        <taxon>Magnoliopsida</taxon>
        <taxon>eudicotyledons</taxon>
        <taxon>Gunneridae</taxon>
        <taxon>Pentapetalae</taxon>
        <taxon>rosids</taxon>
        <taxon>malvids</taxon>
        <taxon>Brassicales</taxon>
        <taxon>Brassicaceae</taxon>
        <taxon>Camelineae</taxon>
        <taxon>Arabidopsis</taxon>
    </lineage>
</organism>
<accession>Q9FNJ9</accession>
<evidence type="ECO:0000250" key="1">
    <source>
        <dbReference type="UniProtKB" id="P62707"/>
    </source>
</evidence>
<evidence type="ECO:0000250" key="2">
    <source>
        <dbReference type="UniProtKB" id="W5EP13"/>
    </source>
</evidence>
<evidence type="ECO:0000255" key="3"/>
<evidence type="ECO:0000269" key="4">
    <source>
    </source>
</evidence>
<evidence type="ECO:0000305" key="5"/>
<evidence type="ECO:0000312" key="6">
    <source>
        <dbReference type="Araport" id="AT5G22620"/>
    </source>
</evidence>
<evidence type="ECO:0000312" key="7">
    <source>
        <dbReference type="EMBL" id="BAB11668.1"/>
    </source>
</evidence>
<name>CA1P_ARATH</name>
<proteinExistence type="evidence at protein level"/>
<gene>
    <name evidence="6" type="ordered locus">At5g22620</name>
    <name evidence="7" type="ORF">MDJ22.4</name>
</gene>
<keyword id="KW-0025">Alternative splicing</keyword>
<keyword id="KW-0150">Chloroplast</keyword>
<keyword id="KW-0378">Hydrolase</keyword>
<keyword id="KW-0934">Plastid</keyword>
<keyword id="KW-1185">Reference proteome</keyword>
<keyword id="KW-0809">Transit peptide</keyword>
<dbReference type="EC" id="3.1.3.63" evidence="2"/>
<dbReference type="EMBL" id="AB006699">
    <property type="protein sequence ID" value="BAB11668.1"/>
    <property type="molecule type" value="Genomic_DNA"/>
</dbReference>
<dbReference type="EMBL" id="CP002688">
    <property type="protein sequence ID" value="AED93052.1"/>
    <property type="molecule type" value="Genomic_DNA"/>
</dbReference>
<dbReference type="EMBL" id="CP002688">
    <property type="protein sequence ID" value="AED93053.1"/>
    <property type="molecule type" value="Genomic_DNA"/>
</dbReference>
<dbReference type="EMBL" id="CP002688">
    <property type="protein sequence ID" value="ANM68791.1"/>
    <property type="molecule type" value="Genomic_DNA"/>
</dbReference>
<dbReference type="EMBL" id="AY062480">
    <property type="protein sequence ID" value="AAL32558.1"/>
    <property type="molecule type" value="mRNA"/>
</dbReference>
<dbReference type="EMBL" id="AY093258">
    <property type="protein sequence ID" value="AAM13257.1"/>
    <property type="molecule type" value="mRNA"/>
</dbReference>
<dbReference type="RefSeq" id="NP_001154730.1">
    <molecule id="Q9FNJ9-1"/>
    <property type="nucleotide sequence ID" value="NM_001161258.1"/>
</dbReference>
<dbReference type="RefSeq" id="NP_001330513.1">
    <molecule id="Q9FNJ9-1"/>
    <property type="nucleotide sequence ID" value="NM_001343744.1"/>
</dbReference>
<dbReference type="RefSeq" id="NP_197654.1">
    <molecule id="Q9FNJ9-1"/>
    <property type="nucleotide sequence ID" value="NM_122168.5"/>
</dbReference>
<dbReference type="SMR" id="Q9FNJ9"/>
<dbReference type="BioGRID" id="17600">
    <property type="interactions" value="1"/>
</dbReference>
<dbReference type="FunCoup" id="Q9FNJ9">
    <property type="interactions" value="1215"/>
</dbReference>
<dbReference type="IntAct" id="Q9FNJ9">
    <property type="interactions" value="1"/>
</dbReference>
<dbReference type="STRING" id="3702.Q9FNJ9"/>
<dbReference type="PaxDb" id="3702-AT5G22620.1"/>
<dbReference type="ProteomicsDB" id="240310">
    <molecule id="Q9FNJ9-1"/>
</dbReference>
<dbReference type="EnsemblPlants" id="AT5G22620.1">
    <molecule id="Q9FNJ9-1"/>
    <property type="protein sequence ID" value="AT5G22620.1"/>
    <property type="gene ID" value="AT5G22620"/>
</dbReference>
<dbReference type="EnsemblPlants" id="AT5G22620.2">
    <molecule id="Q9FNJ9-1"/>
    <property type="protein sequence ID" value="AT5G22620.2"/>
    <property type="gene ID" value="AT5G22620"/>
</dbReference>
<dbReference type="EnsemblPlants" id="AT5G22620.5">
    <molecule id="Q9FNJ9-1"/>
    <property type="protein sequence ID" value="AT5G22620.5"/>
    <property type="gene ID" value="AT5G22620"/>
</dbReference>
<dbReference type="GeneID" id="832325"/>
<dbReference type="Gramene" id="AT5G22620.1">
    <molecule id="Q9FNJ9-1"/>
    <property type="protein sequence ID" value="AT5G22620.1"/>
    <property type="gene ID" value="AT5G22620"/>
</dbReference>
<dbReference type="Gramene" id="AT5G22620.2">
    <molecule id="Q9FNJ9-1"/>
    <property type="protein sequence ID" value="AT5G22620.2"/>
    <property type="gene ID" value="AT5G22620"/>
</dbReference>
<dbReference type="Gramene" id="AT5G22620.5">
    <molecule id="Q9FNJ9-1"/>
    <property type="protein sequence ID" value="AT5G22620.5"/>
    <property type="gene ID" value="AT5G22620"/>
</dbReference>
<dbReference type="KEGG" id="ath:AT5G22620"/>
<dbReference type="Araport" id="AT5G22620"/>
<dbReference type="TAIR" id="AT5G22620"/>
<dbReference type="eggNOG" id="KOG0235">
    <property type="taxonomic scope" value="Eukaryota"/>
</dbReference>
<dbReference type="InParanoid" id="Q9FNJ9"/>
<dbReference type="OMA" id="HDAVNKT"/>
<dbReference type="PhylomeDB" id="Q9FNJ9"/>
<dbReference type="PRO" id="PR:Q9FNJ9"/>
<dbReference type="Proteomes" id="UP000006548">
    <property type="component" value="Chromosome 5"/>
</dbReference>
<dbReference type="ExpressionAtlas" id="Q9FNJ9">
    <property type="expression patterns" value="baseline and differential"/>
</dbReference>
<dbReference type="GO" id="GO:0009507">
    <property type="term" value="C:chloroplast"/>
    <property type="evidence" value="ECO:0000314"/>
    <property type="project" value="TAIR"/>
</dbReference>
<dbReference type="GO" id="GO:0009570">
    <property type="term" value="C:chloroplast stroma"/>
    <property type="evidence" value="ECO:0007669"/>
    <property type="project" value="UniProtKB-SubCell"/>
</dbReference>
<dbReference type="GO" id="GO:0047538">
    <property type="term" value="F:2-carboxy-D-arabinitol-1-phosphatase activity"/>
    <property type="evidence" value="ECO:0007669"/>
    <property type="project" value="UniProtKB-EC"/>
</dbReference>
<dbReference type="CDD" id="cd07067">
    <property type="entry name" value="HP_PGM_like"/>
    <property type="match status" value="1"/>
</dbReference>
<dbReference type="FunFam" id="3.40.50.1240:FF:000149">
    <property type="match status" value="1"/>
</dbReference>
<dbReference type="FunFam" id="3.40.50.1240:FF:000018">
    <property type="entry name" value="Phosphoglycerate mutase"/>
    <property type="match status" value="1"/>
</dbReference>
<dbReference type="Gene3D" id="3.40.50.1240">
    <property type="entry name" value="Phosphoglycerate mutase-like"/>
    <property type="match status" value="2"/>
</dbReference>
<dbReference type="InterPro" id="IPR013078">
    <property type="entry name" value="His_Pase_superF_clade-1"/>
</dbReference>
<dbReference type="InterPro" id="IPR029033">
    <property type="entry name" value="His_PPase_superfam"/>
</dbReference>
<dbReference type="InterPro" id="IPR001345">
    <property type="entry name" value="PG/BPGM_mutase_AS"/>
</dbReference>
<dbReference type="InterPro" id="IPR050275">
    <property type="entry name" value="PGM_Phosphatase"/>
</dbReference>
<dbReference type="PANTHER" id="PTHR48100">
    <property type="entry name" value="BROAD-SPECIFICITY PHOSPHATASE YOR283W-RELATED"/>
    <property type="match status" value="1"/>
</dbReference>
<dbReference type="PANTHER" id="PTHR48100:SF1">
    <property type="entry name" value="HISTIDINE PHOSPHATASE FAMILY PROTEIN-RELATED"/>
    <property type="match status" value="1"/>
</dbReference>
<dbReference type="Pfam" id="PF00300">
    <property type="entry name" value="His_Phos_1"/>
    <property type="match status" value="2"/>
</dbReference>
<dbReference type="SMART" id="SM00855">
    <property type="entry name" value="PGAM"/>
    <property type="match status" value="1"/>
</dbReference>
<dbReference type="SUPFAM" id="SSF53254">
    <property type="entry name" value="Phosphoglycerate mutase-like"/>
    <property type="match status" value="2"/>
</dbReference>
<dbReference type="PROSITE" id="PS00175">
    <property type="entry name" value="PG_MUTASE"/>
    <property type="match status" value="1"/>
</dbReference>
<comment type="function">
    <text evidence="2">Phosphoglycerate mutase-like protein lacking PGM activity, but having 2-carboxy-D-arabinitol 1-phosphate (CA1P) phosphatase activity. Prevents the accumulation of D-glycero-2,3-pentodiulose-1,5-bisphosphate (PDBP) a potent inhibitor of ribulose-1,5-bisphosphate carboxylase (RuBisCO). PDBP is produced during the oxidation of ribulose-1,5-bisphosphate, the substrate of RuBisCO.</text>
</comment>
<comment type="catalytic activity">
    <reaction>
        <text>2-carboxy-D-arabinitol 1-phosphate + H2O = 2-carboxy-D-arabinitol + phosphate</text>
        <dbReference type="Rhea" id="RHEA:17837"/>
        <dbReference type="ChEBI" id="CHEBI:15377"/>
        <dbReference type="ChEBI" id="CHEBI:43474"/>
        <dbReference type="ChEBI" id="CHEBI:58008"/>
        <dbReference type="ChEBI" id="CHEBI:58185"/>
        <dbReference type="EC" id="3.1.3.63"/>
    </reaction>
</comment>
<comment type="subcellular location">
    <subcellularLocation>
        <location evidence="4">Plastid</location>
        <location evidence="4">Chloroplast stroma</location>
    </subcellularLocation>
</comment>
<comment type="alternative products">
    <event type="alternative splicing"/>
    <isoform>
        <id>Q9FNJ9-1</id>
        <name>1</name>
        <sequence type="displayed"/>
    </isoform>
    <text>A number of isoforms are produced. According to EST sequences.</text>
</comment>
<comment type="similarity">
    <text evidence="5">Belongs to the phosphoglycerate mutase family.</text>
</comment>
<reference key="1">
    <citation type="journal article" date="1997" name="DNA Res.">
        <title>Structural analysis of Arabidopsis thaliana chromosome 5. II. Sequence features of the regions of 1,044,062 bp covered by thirteen physically assigned P1 clones.</title>
        <authorList>
            <person name="Kotani H."/>
            <person name="Nakamura Y."/>
            <person name="Sato S."/>
            <person name="Kaneko T."/>
            <person name="Asamizu E."/>
            <person name="Miyajima N."/>
            <person name="Tabata S."/>
        </authorList>
    </citation>
    <scope>NUCLEOTIDE SEQUENCE [LARGE SCALE GENOMIC DNA]</scope>
    <source>
        <strain>cv. Columbia</strain>
    </source>
</reference>
<reference key="2">
    <citation type="journal article" date="2017" name="Plant J.">
        <title>Araport11: a complete reannotation of the Arabidopsis thaliana reference genome.</title>
        <authorList>
            <person name="Cheng C.Y."/>
            <person name="Krishnakumar V."/>
            <person name="Chan A.P."/>
            <person name="Thibaud-Nissen F."/>
            <person name="Schobel S."/>
            <person name="Town C.D."/>
        </authorList>
    </citation>
    <scope>GENOME REANNOTATION</scope>
    <source>
        <strain>cv. Columbia</strain>
    </source>
</reference>
<reference key="3">
    <citation type="journal article" date="2003" name="Science">
        <title>Empirical analysis of transcriptional activity in the Arabidopsis genome.</title>
        <authorList>
            <person name="Yamada K."/>
            <person name="Lim J."/>
            <person name="Dale J.M."/>
            <person name="Chen H."/>
            <person name="Shinn P."/>
            <person name="Palm C.J."/>
            <person name="Southwick A.M."/>
            <person name="Wu H.C."/>
            <person name="Kim C.J."/>
            <person name="Nguyen M."/>
            <person name="Pham P.K."/>
            <person name="Cheuk R.F."/>
            <person name="Karlin-Newmann G."/>
            <person name="Liu S.X."/>
            <person name="Lam B."/>
            <person name="Sakano H."/>
            <person name="Wu T."/>
            <person name="Yu G."/>
            <person name="Miranda M."/>
            <person name="Quach H.L."/>
            <person name="Tripp M."/>
            <person name="Chang C.H."/>
            <person name="Lee J.M."/>
            <person name="Toriumi M.J."/>
            <person name="Chan M.M."/>
            <person name="Tang C.C."/>
            <person name="Onodera C.S."/>
            <person name="Deng J.M."/>
            <person name="Akiyama K."/>
            <person name="Ansari Y."/>
            <person name="Arakawa T."/>
            <person name="Banh J."/>
            <person name="Banno F."/>
            <person name="Bowser L."/>
            <person name="Brooks S.Y."/>
            <person name="Carninci P."/>
            <person name="Chao Q."/>
            <person name="Choy N."/>
            <person name="Enju A."/>
            <person name="Goldsmith A.D."/>
            <person name="Gurjal M."/>
            <person name="Hansen N.F."/>
            <person name="Hayashizaki Y."/>
            <person name="Johnson-Hopson C."/>
            <person name="Hsuan V.W."/>
            <person name="Iida K."/>
            <person name="Karnes M."/>
            <person name="Khan S."/>
            <person name="Koesema E."/>
            <person name="Ishida J."/>
            <person name="Jiang P.X."/>
            <person name="Jones T."/>
            <person name="Kawai J."/>
            <person name="Kamiya A."/>
            <person name="Meyers C."/>
            <person name="Nakajima M."/>
            <person name="Narusaka M."/>
            <person name="Seki M."/>
            <person name="Sakurai T."/>
            <person name="Satou M."/>
            <person name="Tamse R."/>
            <person name="Vaysberg M."/>
            <person name="Wallender E.K."/>
            <person name="Wong C."/>
            <person name="Yamamura Y."/>
            <person name="Yuan S."/>
            <person name="Shinozaki K."/>
            <person name="Davis R.W."/>
            <person name="Theologis A."/>
            <person name="Ecker J.R."/>
        </authorList>
    </citation>
    <scope>NUCLEOTIDE SEQUENCE [LARGE SCALE MRNA]</scope>
    <source>
        <strain>cv. Columbia</strain>
    </source>
</reference>
<reference key="4">
    <citation type="journal article" date="2011" name="Proteomics">
        <title>Mining the soluble chloroplast proteome by affinity chromatography.</title>
        <authorList>
            <person name="Bayer R.G."/>
            <person name="Stael S."/>
            <person name="Csaszar E."/>
            <person name="Teige M."/>
        </authorList>
    </citation>
    <scope>IDENTIFICATION BY MASS SPECTROMETRY</scope>
    <scope>SUBCELLULAR LOCATION</scope>
</reference>
<protein>
    <recommendedName>
        <fullName evidence="5">Probable 2-carboxy-D-arabinitol-1-phosphatase</fullName>
        <ecNumber evidence="2">3.1.3.63</ecNumber>
    </recommendedName>
</protein>